<proteinExistence type="evidence at protein level"/>
<organism>
    <name type="scientific">Saccharomyces cerevisiae (strain ATCC 204508 / S288c)</name>
    <name type="common">Baker's yeast</name>
    <dbReference type="NCBI Taxonomy" id="559292"/>
    <lineage>
        <taxon>Eukaryota</taxon>
        <taxon>Fungi</taxon>
        <taxon>Dikarya</taxon>
        <taxon>Ascomycota</taxon>
        <taxon>Saccharomycotina</taxon>
        <taxon>Saccharomycetes</taxon>
        <taxon>Saccharomycetales</taxon>
        <taxon>Saccharomycetaceae</taxon>
        <taxon>Saccharomyces</taxon>
    </lineage>
</organism>
<sequence>MEYWHYVETTSSGQPLLREGEKDIFIDQSVGLYHGKSKILQRQRGRIFLTSQRIIYIDDAKPTQNSLGLELDDLAYVNYSSGFLTRSPRLILFFKDPSSKDELGKSAETASADVVSTWVCPICMVSNETQGEFTKDTLPTPICINCGVPADYELTKSSINCSNAIDPNANPQNQFGVNSENICPACTFANHPQIGNCEICGHRLPNASKVRSKLNRLNFHDSRVHIELEKNSLARNKSSHSALSSSSSTGSSTEFVQLSFRKSDGVLFSQATERALENILTEKNKHIFNQNVVSVNGVDMRKGASSHEYNNEVPFIETKLSRIGISSLEKSRENQLLNNDILFNNALTDLNKLMSLATSIERLYKNSNITMKTKTLNLQDESTVNEPKTRRPLLILDREKFLNKELFLDEIAREIYEFTLSEFKDLNSDTNYMIITLVDLYAMYNKSMRIGTGLISPMEMREACERFEHLGLNELKLVKVNKRILCVTSEKFDVVKEKLVDLIGDNPGSDLLRLTQILSSNNSKSNWTLGILMEVLQNCVDEGDLLIDKQLSGIYYYKNSYWPSHI</sequence>
<keyword id="KW-0002">3D-structure</keyword>
<keyword id="KW-0963">Cytoplasm</keyword>
<keyword id="KW-0967">Endosome</keyword>
<keyword id="KW-0472">Membrane</keyword>
<keyword id="KW-0479">Metal-binding</keyword>
<keyword id="KW-0653">Protein transport</keyword>
<keyword id="KW-1185">Reference proteome</keyword>
<keyword id="KW-0677">Repeat</keyword>
<keyword id="KW-0813">Transport</keyword>
<keyword id="KW-0862">Zinc</keyword>
<keyword id="KW-0863">Zinc-finger</keyword>
<reference key="1">
    <citation type="journal article" date="1997" name="Nature">
        <title>The nucleotide sequence of Saccharomyces cerevisiae chromosome XII.</title>
        <authorList>
            <person name="Johnston M."/>
            <person name="Hillier L.W."/>
            <person name="Riles L."/>
            <person name="Albermann K."/>
            <person name="Andre B."/>
            <person name="Ansorge W."/>
            <person name="Benes V."/>
            <person name="Brueckner M."/>
            <person name="Delius H."/>
            <person name="Dubois E."/>
            <person name="Duesterhoeft A."/>
            <person name="Entian K.-D."/>
            <person name="Floeth M."/>
            <person name="Goffeau A."/>
            <person name="Hebling U."/>
            <person name="Heumann K."/>
            <person name="Heuss-Neitzel D."/>
            <person name="Hilbert H."/>
            <person name="Hilger F."/>
            <person name="Kleine K."/>
            <person name="Koetter P."/>
            <person name="Louis E.J."/>
            <person name="Messenguy F."/>
            <person name="Mewes H.-W."/>
            <person name="Miosga T."/>
            <person name="Moestl D."/>
            <person name="Mueller-Auer S."/>
            <person name="Nentwich U."/>
            <person name="Obermaier B."/>
            <person name="Piravandi E."/>
            <person name="Pohl T.M."/>
            <person name="Portetelle D."/>
            <person name="Purnelle B."/>
            <person name="Rechmann S."/>
            <person name="Rieger M."/>
            <person name="Rinke M."/>
            <person name="Rose M."/>
            <person name="Scharfe M."/>
            <person name="Scherens B."/>
            <person name="Scholler P."/>
            <person name="Schwager C."/>
            <person name="Schwarz S."/>
            <person name="Underwood A.P."/>
            <person name="Urrestarazu L.A."/>
            <person name="Vandenbol M."/>
            <person name="Verhasselt P."/>
            <person name="Vierendeels F."/>
            <person name="Voet M."/>
            <person name="Volckaert G."/>
            <person name="Voss H."/>
            <person name="Wambutt R."/>
            <person name="Wedler E."/>
            <person name="Wedler H."/>
            <person name="Zimmermann F.K."/>
            <person name="Zollner A."/>
            <person name="Hani J."/>
            <person name="Hoheisel J.D."/>
        </authorList>
    </citation>
    <scope>NUCLEOTIDE SEQUENCE [LARGE SCALE GENOMIC DNA]</scope>
    <source>
        <strain>ATCC 204508 / S288c</strain>
    </source>
</reference>
<reference key="2">
    <citation type="journal article" date="2014" name="G3 (Bethesda)">
        <title>The reference genome sequence of Saccharomyces cerevisiae: Then and now.</title>
        <authorList>
            <person name="Engel S.R."/>
            <person name="Dietrich F.S."/>
            <person name="Fisk D.G."/>
            <person name="Binkley G."/>
            <person name="Balakrishnan R."/>
            <person name="Costanzo M.C."/>
            <person name="Dwight S.S."/>
            <person name="Hitz B.C."/>
            <person name="Karra K."/>
            <person name="Nash R.S."/>
            <person name="Weng S."/>
            <person name="Wong E.D."/>
            <person name="Lloyd P."/>
            <person name="Skrzypek M.S."/>
            <person name="Miyasato S.R."/>
            <person name="Simison M."/>
            <person name="Cherry J.M."/>
        </authorList>
    </citation>
    <scope>GENOME REANNOTATION</scope>
    <source>
        <strain>ATCC 204508 / S288c</strain>
    </source>
</reference>
<reference key="3">
    <citation type="journal article" date="2002" name="Dev. Cell">
        <title>Endosome-associated complex, ESCRT-II, recruits transport machinery for protein sorting at the multivesicular body.</title>
        <authorList>
            <person name="Babst M."/>
            <person name="Katzmann D.J."/>
            <person name="Snyder W.B."/>
            <person name="Wendland B."/>
            <person name="Emr S.D."/>
        </authorList>
    </citation>
    <scope>FUNCTION</scope>
    <scope>SUBUNIT</scope>
    <scope>SUBCELLULAR LOCATION</scope>
</reference>
<reference key="4">
    <citation type="journal article" date="2003" name="Nature">
        <title>Global analysis of protein expression in yeast.</title>
        <authorList>
            <person name="Ghaemmaghami S."/>
            <person name="Huh W.-K."/>
            <person name="Bower K."/>
            <person name="Howson R.W."/>
            <person name="Belle A."/>
            <person name="Dephoure N."/>
            <person name="O'Shea E.K."/>
            <person name="Weissman J.S."/>
        </authorList>
    </citation>
    <scope>LEVEL OF PROTEIN EXPRESSION [LARGE SCALE ANALYSIS]</scope>
</reference>
<reference key="5">
    <citation type="journal article" date="2004" name="EMBO J.">
        <title>Ubiquitin interactions of NZF zinc fingers.</title>
        <authorList>
            <person name="Alam S.L."/>
            <person name="Sun J."/>
            <person name="Payne M."/>
            <person name="Welch B.D."/>
            <person name="Blake B.K."/>
            <person name="Davis D.R."/>
            <person name="Meyer H.H."/>
            <person name="Emr S.D."/>
            <person name="Sundquist W.I."/>
        </authorList>
    </citation>
    <scope>FUNCTION</scope>
    <scope>SUBUNIT</scope>
    <scope>DOMAIN</scope>
    <scope>MUTAGENESIS OF 187-THR-PHE-188</scope>
</reference>
<reference key="6">
    <citation type="journal article" date="2004" name="Dev. Cell">
        <title>ESCRT-II, an endosome-associated complex required for protein sorting: crystal structure and interactions with ESCRT-III and membranes.</title>
        <authorList>
            <person name="Teo H."/>
            <person name="Perisic O."/>
            <person name="Gonzalez B."/>
            <person name="Williams R.L."/>
        </authorList>
    </citation>
    <scope>X-RAY CRYSTALLOGRAPHY (3.6 ANGSTROMS) IN COMPLEX WITH VPS25 AND SNF8</scope>
    <scope>FUNCTION</scope>
</reference>
<reference key="7">
    <citation type="journal article" date="2004" name="Nature">
        <title>Structure of the ESCRT-II endosomal trafficking complex.</title>
        <authorList>
            <person name="Hierro A."/>
            <person name="Sun J."/>
            <person name="Rusnak A.S."/>
            <person name="Kim J."/>
            <person name="Prag G."/>
            <person name="Emr S.D."/>
            <person name="Hurley J.H."/>
        </authorList>
    </citation>
    <scope>X-RAY CRYSTALLOGRAPHY (3.6 ANGSTROMS) IN COMPLEX WITH VPS25 AND SNF8</scope>
    <scope>FUNCTION</scope>
</reference>
<feature type="chain" id="PRO_0000215227" description="Vacuolar protein-sorting-associated protein 36">
    <location>
        <begin position="1"/>
        <end position="566"/>
    </location>
</feature>
<feature type="domain" description="GLUE N-terminal" evidence="1">
    <location>
        <begin position="7"/>
        <end position="96"/>
    </location>
</feature>
<feature type="domain" description="GLUE C-terminal" evidence="1">
    <location>
        <begin position="255"/>
        <end position="288"/>
    </location>
</feature>
<feature type="zinc finger region" description="RanBP2-type 1; degenerate">
    <location>
        <begin position="114"/>
        <end position="151"/>
    </location>
</feature>
<feature type="zinc finger region" description="RanBP2-type 2">
    <location>
        <begin position="177"/>
        <end position="205"/>
    </location>
</feature>
<feature type="mutagenesis site" description="Abolishes ubiquitin-binding and vacuole sorting of ubiquitinated proteins." evidence="4">
    <original>TF</original>
    <variation>GS</variation>
    <location>
        <begin position="187"/>
        <end position="188"/>
    </location>
</feature>
<feature type="strand" evidence="8">
    <location>
        <begin position="23"/>
        <end position="34"/>
    </location>
</feature>
<feature type="strand" evidence="8">
    <location>
        <begin position="43"/>
        <end position="60"/>
    </location>
</feature>
<feature type="helix" evidence="8">
    <location>
        <begin position="62"/>
        <end position="65"/>
    </location>
</feature>
<feature type="strand" evidence="8">
    <location>
        <begin position="67"/>
        <end position="70"/>
    </location>
</feature>
<feature type="helix" evidence="8">
    <location>
        <begin position="71"/>
        <end position="73"/>
    </location>
</feature>
<feature type="strand" evidence="8">
    <location>
        <begin position="74"/>
        <end position="80"/>
    </location>
</feature>
<feature type="strand" evidence="8">
    <location>
        <begin position="82"/>
        <end position="87"/>
    </location>
</feature>
<feature type="strand" evidence="8">
    <location>
        <begin position="89"/>
        <end position="96"/>
    </location>
</feature>
<feature type="strand" evidence="9">
    <location>
        <begin position="116"/>
        <end position="119"/>
    </location>
</feature>
<feature type="turn" evidence="9">
    <location>
        <begin position="121"/>
        <end position="123"/>
    </location>
</feature>
<feature type="strand" evidence="9">
    <location>
        <begin position="126"/>
        <end position="131"/>
    </location>
</feature>
<feature type="turn" evidence="9">
    <location>
        <begin position="144"/>
        <end position="146"/>
    </location>
</feature>
<feature type="helix" evidence="9">
    <location>
        <begin position="152"/>
        <end position="155"/>
    </location>
</feature>
<feature type="helix" evidence="9">
    <location>
        <begin position="156"/>
        <end position="158"/>
    </location>
</feature>
<comment type="function">
    <text evidence="2 4 5 6">Component of the ESCRT-II complex, which is required for multivesicular body (MVB) formation and sorting of endosomal cargo proteins into MVBs (PubMed:12194858, PubMed:15329733, PubMed:15469844). The MVB pathway mediates delivery of transmembrane proteins into the lumen of the lysosome for degradation (PubMed:12194858). The ESCRT-II complex is probably involved in the recruitment of the ESCRT-III complex (PubMed:12194858). Involved in the trafficking of the plasma membrane ATPase (PubMed:12194858). Its ability to bind ubiquitin plays a central role in endosomal sorting of ubiquitinated cargo proteins by the ESCRT complexes (PubMed:15029239).</text>
</comment>
<comment type="subunit">
    <text evidence="2 4 5 6">Component of the endosomal sorting required for transport complex II (ESCRT-II), which consists of 2 copies of VPS25, 1 copy of SNF8, and 1 copy of VPS36 (PubMed:15329733, PubMed:15469844). The ESCRT-II complex interacts directly with the VPS20 subunit of the ESCRT-III complex (PubMed:12194858). Binds ubiquitin (PubMed:15029239).</text>
</comment>
<comment type="interaction">
    <interactant intactId="EBI-36540">
        <id>Q06696</id>
    </interactant>
    <interactant intactId="EBI-30277">
        <id>Q12483</id>
        <label>SNF8</label>
    </interactant>
    <organismsDiffer>false</organismsDiffer>
    <experiments>11</experiments>
</comment>
<comment type="interaction">
    <interactant intactId="EBI-36540">
        <id>Q06696</id>
    </interactant>
    <interactant intactId="EBI-25595">
        <id>P47142</id>
        <label>VPS25</label>
    </interactant>
    <organismsDiffer>false</organismsDiffer>
    <experiments>4</experiments>
</comment>
<comment type="interaction">
    <interactant intactId="EBI-36540">
        <id>Q06696</id>
    </interactant>
    <interactant intactId="EBI-20387">
        <id>Q02767</id>
        <label>VPS28</label>
    </interactant>
    <organismsDiffer>false</organismsDiffer>
    <experiments>6</experiments>
</comment>
<comment type="interaction">
    <interactant intactId="EBI-36540">
        <id>Q06696</id>
    </interactant>
    <interactant intactId="EBI-413074">
        <id>P62991</id>
        <label>Ubc</label>
    </interactant>
    <organismsDiffer>true</organismsDiffer>
    <experiments>2</experiments>
</comment>
<comment type="subcellular location">
    <subcellularLocation>
        <location evidence="2">Cytoplasm</location>
    </subcellularLocation>
    <subcellularLocation>
        <location evidence="2">Endosome membrane</location>
        <topology evidence="2">Peripheral membrane protein</topology>
    </subcellularLocation>
</comment>
<comment type="domain">
    <text evidence="4">The second RanBP2-type zinc-finger is functional and binds ubiquitin.</text>
</comment>
<comment type="miscellaneous">
    <text evidence="3">Present with 2470 molecules/cell in log phase SD medium.</text>
</comment>
<comment type="similarity">
    <text evidence="7">Belongs to the VPS36 family.</text>
</comment>
<protein>
    <recommendedName>
        <fullName>Vacuolar protein-sorting-associated protein 36</fullName>
    </recommendedName>
    <alternativeName>
        <fullName>ESCRT-II complex subunit VPS36</fullName>
    </alternativeName>
</protein>
<accession>Q06696</accession>
<accession>D6VZ53</accession>
<evidence type="ECO:0000255" key="1">
    <source>
        <dbReference type="PROSITE-ProRule" id="PRU00828"/>
    </source>
</evidence>
<evidence type="ECO:0000269" key="2">
    <source>
    </source>
</evidence>
<evidence type="ECO:0000269" key="3">
    <source>
    </source>
</evidence>
<evidence type="ECO:0000269" key="4">
    <source>
    </source>
</evidence>
<evidence type="ECO:0000269" key="5">
    <source>
    </source>
</evidence>
<evidence type="ECO:0000269" key="6">
    <source>
    </source>
</evidence>
<evidence type="ECO:0000305" key="7"/>
<evidence type="ECO:0007829" key="8">
    <source>
        <dbReference type="PDB" id="2CAY"/>
    </source>
</evidence>
<evidence type="ECO:0007829" key="9">
    <source>
        <dbReference type="PDB" id="2J9U"/>
    </source>
</evidence>
<gene>
    <name type="primary">VPS36</name>
    <name type="synonym">GRD12</name>
    <name type="synonym">VAC3</name>
    <name type="synonym">VPL11</name>
    <name type="ordered locus">YLR417W</name>
</gene>
<dbReference type="EMBL" id="U20162">
    <property type="protein sequence ID" value="AAB67493.1"/>
    <property type="molecule type" value="Genomic_DNA"/>
</dbReference>
<dbReference type="EMBL" id="BK006945">
    <property type="protein sequence ID" value="DAA09719.1"/>
    <property type="molecule type" value="Genomic_DNA"/>
</dbReference>
<dbReference type="PIR" id="S59382">
    <property type="entry name" value="S59382"/>
</dbReference>
<dbReference type="RefSeq" id="NP_013521.3">
    <property type="nucleotide sequence ID" value="NM_001182305.3"/>
</dbReference>
<dbReference type="PDB" id="1U5T">
    <property type="method" value="X-ray"/>
    <property type="resolution" value="3.60 A"/>
    <property type="chains" value="B=396-564"/>
</dbReference>
<dbReference type="PDB" id="1W7P">
    <property type="method" value="X-ray"/>
    <property type="resolution" value="3.60 A"/>
    <property type="chains" value="D=1-566"/>
</dbReference>
<dbReference type="PDB" id="2CAY">
    <property type="method" value="X-ray"/>
    <property type="resolution" value="1.90 A"/>
    <property type="chains" value="A/B=1-98, A=251-289"/>
</dbReference>
<dbReference type="PDB" id="2J9U">
    <property type="method" value="X-ray"/>
    <property type="resolution" value="2.00 A"/>
    <property type="chains" value="B/D=110-171"/>
</dbReference>
<dbReference type="PDBsum" id="1U5T"/>
<dbReference type="PDBsum" id="1W7P"/>
<dbReference type="PDBsum" id="2CAY"/>
<dbReference type="PDBsum" id="2J9U"/>
<dbReference type="SMR" id="Q06696"/>
<dbReference type="BioGRID" id="31675">
    <property type="interactions" value="171"/>
</dbReference>
<dbReference type="ComplexPortal" id="CPX-1623">
    <property type="entry name" value="ESCRT-II complex"/>
</dbReference>
<dbReference type="DIP" id="DIP-1744N"/>
<dbReference type="FunCoup" id="Q06696">
    <property type="interactions" value="115"/>
</dbReference>
<dbReference type="IntAct" id="Q06696">
    <property type="interactions" value="15"/>
</dbReference>
<dbReference type="MINT" id="Q06696"/>
<dbReference type="STRING" id="4932.YLR417W"/>
<dbReference type="TCDB" id="3.A.31.1.1">
    <property type="family name" value="the endosomal sorting complexes required for transport iii (escrt-iii) family"/>
</dbReference>
<dbReference type="iPTMnet" id="Q06696"/>
<dbReference type="PaxDb" id="4932-YLR417W"/>
<dbReference type="PeptideAtlas" id="Q06696"/>
<dbReference type="EnsemblFungi" id="YLR417W_mRNA">
    <property type="protein sequence ID" value="YLR417W"/>
    <property type="gene ID" value="YLR417W"/>
</dbReference>
<dbReference type="GeneID" id="851135"/>
<dbReference type="KEGG" id="sce:YLR417W"/>
<dbReference type="AGR" id="SGD:S000004409"/>
<dbReference type="SGD" id="S000004409">
    <property type="gene designation" value="VPS36"/>
</dbReference>
<dbReference type="VEuPathDB" id="FungiDB:YLR417W"/>
<dbReference type="eggNOG" id="KOG2760">
    <property type="taxonomic scope" value="Eukaryota"/>
</dbReference>
<dbReference type="GeneTree" id="ENSGT00390000017209"/>
<dbReference type="HOGENOM" id="CLU_015433_2_1_1"/>
<dbReference type="InParanoid" id="Q06696"/>
<dbReference type="OMA" id="YAMYNKS"/>
<dbReference type="OrthoDB" id="271448at2759"/>
<dbReference type="BioCyc" id="YEAST:G3O-32478-MONOMER"/>
<dbReference type="Reactome" id="R-SCE-917729">
    <property type="pathway name" value="Endosomal Sorting Complex Required For Transport (ESCRT)"/>
</dbReference>
<dbReference type="BioGRID-ORCS" id="851135">
    <property type="hits" value="3 hits in 10 CRISPR screens"/>
</dbReference>
<dbReference type="EvolutionaryTrace" id="Q06696"/>
<dbReference type="PRO" id="PR:Q06696"/>
<dbReference type="Proteomes" id="UP000002311">
    <property type="component" value="Chromosome XII"/>
</dbReference>
<dbReference type="RNAct" id="Q06696">
    <property type="molecule type" value="protein"/>
</dbReference>
<dbReference type="GO" id="GO:0000814">
    <property type="term" value="C:ESCRT II complex"/>
    <property type="evidence" value="ECO:0000314"/>
    <property type="project" value="SGD"/>
</dbReference>
<dbReference type="GO" id="GO:0031902">
    <property type="term" value="C:late endosome membrane"/>
    <property type="evidence" value="ECO:0000318"/>
    <property type="project" value="GO_Central"/>
</dbReference>
<dbReference type="GO" id="GO:0032266">
    <property type="term" value="F:phosphatidylinositol-3-phosphate binding"/>
    <property type="evidence" value="ECO:0007669"/>
    <property type="project" value="InterPro"/>
</dbReference>
<dbReference type="GO" id="GO:0043130">
    <property type="term" value="F:ubiquitin binding"/>
    <property type="evidence" value="ECO:0000314"/>
    <property type="project" value="SGD"/>
</dbReference>
<dbReference type="GO" id="GO:0008270">
    <property type="term" value="F:zinc ion binding"/>
    <property type="evidence" value="ECO:0007669"/>
    <property type="project" value="UniProtKB-KW"/>
</dbReference>
<dbReference type="GO" id="GO:1904669">
    <property type="term" value="P:ATP export"/>
    <property type="evidence" value="ECO:0000315"/>
    <property type="project" value="SGD"/>
</dbReference>
<dbReference type="GO" id="GO:0032258">
    <property type="term" value="P:cytoplasm to vacuole targeting by the Cvt pathway"/>
    <property type="evidence" value="ECO:0000315"/>
    <property type="project" value="SGD"/>
</dbReference>
<dbReference type="GO" id="GO:0016236">
    <property type="term" value="P:macroautophagy"/>
    <property type="evidence" value="ECO:0000315"/>
    <property type="project" value="SGD"/>
</dbReference>
<dbReference type="GO" id="GO:0000122">
    <property type="term" value="P:negative regulation of transcription by RNA polymerase II"/>
    <property type="evidence" value="ECO:0000315"/>
    <property type="project" value="SGD"/>
</dbReference>
<dbReference type="GO" id="GO:0045053">
    <property type="term" value="P:protein retention in Golgi apparatus"/>
    <property type="evidence" value="ECO:0000315"/>
    <property type="project" value="SGD"/>
</dbReference>
<dbReference type="GO" id="GO:0006623">
    <property type="term" value="P:protein targeting to vacuole"/>
    <property type="evidence" value="ECO:0000315"/>
    <property type="project" value="SGD"/>
</dbReference>
<dbReference type="GO" id="GO:0043328">
    <property type="term" value="P:protein transport to vacuole involved in ubiquitin-dependent protein catabolic process via the multivesicular body sorting pathway"/>
    <property type="evidence" value="ECO:0000318"/>
    <property type="project" value="GO_Central"/>
</dbReference>
<dbReference type="GO" id="GO:0043162">
    <property type="term" value="P:ubiquitin-dependent protein catabolic process via the multivesicular body sorting pathway"/>
    <property type="evidence" value="ECO:0000314"/>
    <property type="project" value="ComplexPortal"/>
</dbReference>
<dbReference type="CDD" id="cd13227">
    <property type="entry name" value="PH-GRAM-like_Vps36"/>
    <property type="match status" value="1"/>
</dbReference>
<dbReference type="DisProt" id="DP01611"/>
<dbReference type="FunFam" id="1.10.10.10:FF:000727">
    <property type="entry name" value="Vacuolar sorting protein"/>
    <property type="match status" value="1"/>
</dbReference>
<dbReference type="FunFam" id="1.10.10.10:FF:000753">
    <property type="entry name" value="Vacuolar sorting protein"/>
    <property type="match status" value="1"/>
</dbReference>
<dbReference type="FunFam" id="2.30.29.30:FF:000576">
    <property type="entry name" value="Vacuolar sorting protein"/>
    <property type="match status" value="1"/>
</dbReference>
<dbReference type="Gene3D" id="2.30.29.30">
    <property type="entry name" value="Pleckstrin-homology domain (PH domain)/Phosphotyrosine-binding domain (PTB)"/>
    <property type="match status" value="2"/>
</dbReference>
<dbReference type="Gene3D" id="1.10.10.10">
    <property type="entry name" value="Winged helix-like DNA-binding domain superfamily/Winged helix DNA-binding domain"/>
    <property type="match status" value="2"/>
</dbReference>
<dbReference type="InterPro" id="IPR021648">
    <property type="entry name" value="GLUE_dom"/>
</dbReference>
<dbReference type="InterPro" id="IPR011993">
    <property type="entry name" value="PH-like_dom_sf"/>
</dbReference>
<dbReference type="InterPro" id="IPR040608">
    <property type="entry name" value="Snf8/Vps36"/>
</dbReference>
<dbReference type="InterPro" id="IPR037855">
    <property type="entry name" value="Vps36"/>
</dbReference>
<dbReference type="InterPro" id="IPR031558">
    <property type="entry name" value="Vps36-NZF-N"/>
</dbReference>
<dbReference type="InterPro" id="IPR036388">
    <property type="entry name" value="WH-like_DNA-bd_sf"/>
</dbReference>
<dbReference type="InterPro" id="IPR036390">
    <property type="entry name" value="WH_DNA-bd_sf"/>
</dbReference>
<dbReference type="InterPro" id="IPR001876">
    <property type="entry name" value="Znf_RanBP2"/>
</dbReference>
<dbReference type="InterPro" id="IPR036443">
    <property type="entry name" value="Znf_RanBP2_sf"/>
</dbReference>
<dbReference type="PANTHER" id="PTHR13128">
    <property type="entry name" value="VACUOLAR PROTEIN-SORTING-ASSOCIATED PROTEIN 36"/>
    <property type="match status" value="1"/>
</dbReference>
<dbReference type="PANTHER" id="PTHR13128:SF12">
    <property type="entry name" value="VACUOLAR PROTEIN-SORTING-ASSOCIATED PROTEIN 36"/>
    <property type="match status" value="1"/>
</dbReference>
<dbReference type="Pfam" id="PF04157">
    <property type="entry name" value="EAP30"/>
    <property type="match status" value="1"/>
</dbReference>
<dbReference type="Pfam" id="PF16988">
    <property type="entry name" value="Vps36-NZF-N"/>
    <property type="match status" value="1"/>
</dbReference>
<dbReference type="Pfam" id="PF11605">
    <property type="entry name" value="Vps36_ESCRT-II"/>
    <property type="match status" value="1"/>
</dbReference>
<dbReference type="SMART" id="SM00547">
    <property type="entry name" value="ZnF_RBZ"/>
    <property type="match status" value="2"/>
</dbReference>
<dbReference type="SUPFAM" id="SSF50729">
    <property type="entry name" value="PH domain-like"/>
    <property type="match status" value="1"/>
</dbReference>
<dbReference type="SUPFAM" id="SSF90209">
    <property type="entry name" value="Ran binding protein zinc finger-like"/>
    <property type="match status" value="1"/>
</dbReference>
<dbReference type="SUPFAM" id="SSF46785">
    <property type="entry name" value="Winged helix' DNA-binding domain"/>
    <property type="match status" value="1"/>
</dbReference>
<dbReference type="PROSITE" id="PS51495">
    <property type="entry name" value="GLUE"/>
    <property type="match status" value="1"/>
</dbReference>
<name>VPS36_YEAST</name>